<protein>
    <recommendedName>
        <fullName evidence="1">Probable potassium transport system protein Kup 1</fullName>
    </recommendedName>
</protein>
<accession>Q136R8</accession>
<gene>
    <name evidence="1" type="primary">kup1</name>
    <name type="ordered locus">RPD_2692</name>
</gene>
<sequence length="634" mass="69107">MSDALSTPQVALPAQRPTPFLTLSLGSIGVVYGDIGTSPLYALKESLNAATAGNALTEAMVLGVMSLMLWTLVIIVTLKYVLLIMRADNHGEGGTLTLMALLQHVMHRRFAAISLLGMAGAALFYGDAIITPAISVLSAVEGLKLVAPVFDPYILPLSMAILIGLFVVQFRGTAAVAAWFGPIMLLWFTVMALGGIMNLITDLSVLRAINPLYGVDFLMHHGRAGLLALGAVFLTVTGAEALYADMGHFSRRPIQFAWFAVVFPALALCYLGQGAMLMSHPERLENPFFFLFPEWALLPMVGLATAATIIASQAVISGAYSLTQQAIQLGLLPRMEIRRTSETEKGQIYIPRANWLLLIAVLYLVFAFKSSSALASAYGIAVTGTMVITSVMAYFVMRKCWKWSVATSALIIAPFLTVDLIFLMANMLKIFEGGWIPLVIGGGLMGVMITWRRGTKIVAKKTVRDEVDLGDFIKSISVSSSISRVRGVAVFLTGNPNSTPTSLMHNLKHNKVLHEKNVILRVVTEDVPRVPEAERSSVEVVNDLFSRIELRFGYMESPNVPKALAACADRGFSFDIMSTSFFLSRRVIRPAVPSEMPRWQSLLFANMAKWADDASLYFRIPTGRAVEVGMQINV</sequence>
<proteinExistence type="inferred from homology"/>
<name>KUP1_RHOPS</name>
<dbReference type="EMBL" id="CP000283">
    <property type="protein sequence ID" value="ABE39921.1"/>
    <property type="molecule type" value="Genomic_DNA"/>
</dbReference>
<dbReference type="STRING" id="316057.RPD_2692"/>
<dbReference type="KEGG" id="rpd:RPD_2692"/>
<dbReference type="eggNOG" id="COG3158">
    <property type="taxonomic scope" value="Bacteria"/>
</dbReference>
<dbReference type="HOGENOM" id="CLU_008142_4_2_5"/>
<dbReference type="BioCyc" id="RPAL316057:RPD_RS13540-MONOMER"/>
<dbReference type="Proteomes" id="UP000001818">
    <property type="component" value="Chromosome"/>
</dbReference>
<dbReference type="GO" id="GO:0005886">
    <property type="term" value="C:plasma membrane"/>
    <property type="evidence" value="ECO:0007669"/>
    <property type="project" value="UniProtKB-SubCell"/>
</dbReference>
<dbReference type="GO" id="GO:0015079">
    <property type="term" value="F:potassium ion transmembrane transporter activity"/>
    <property type="evidence" value="ECO:0007669"/>
    <property type="project" value="UniProtKB-UniRule"/>
</dbReference>
<dbReference type="GO" id="GO:0015293">
    <property type="term" value="F:symporter activity"/>
    <property type="evidence" value="ECO:0007669"/>
    <property type="project" value="UniProtKB-UniRule"/>
</dbReference>
<dbReference type="HAMAP" id="MF_01522">
    <property type="entry name" value="Kup"/>
    <property type="match status" value="1"/>
</dbReference>
<dbReference type="InterPro" id="IPR003855">
    <property type="entry name" value="K+_transporter"/>
</dbReference>
<dbReference type="InterPro" id="IPR053952">
    <property type="entry name" value="K_trans_C"/>
</dbReference>
<dbReference type="InterPro" id="IPR053951">
    <property type="entry name" value="K_trans_N"/>
</dbReference>
<dbReference type="InterPro" id="IPR023051">
    <property type="entry name" value="Kup"/>
</dbReference>
<dbReference type="PANTHER" id="PTHR30540:SF79">
    <property type="entry name" value="LOW AFFINITY POTASSIUM TRANSPORT SYSTEM PROTEIN KUP"/>
    <property type="match status" value="1"/>
</dbReference>
<dbReference type="PANTHER" id="PTHR30540">
    <property type="entry name" value="OSMOTIC STRESS POTASSIUM TRANSPORTER"/>
    <property type="match status" value="1"/>
</dbReference>
<dbReference type="Pfam" id="PF02705">
    <property type="entry name" value="K_trans"/>
    <property type="match status" value="1"/>
</dbReference>
<dbReference type="Pfam" id="PF22776">
    <property type="entry name" value="K_trans_C"/>
    <property type="match status" value="1"/>
</dbReference>
<evidence type="ECO:0000255" key="1">
    <source>
        <dbReference type="HAMAP-Rule" id="MF_01522"/>
    </source>
</evidence>
<keyword id="KW-0997">Cell inner membrane</keyword>
<keyword id="KW-1003">Cell membrane</keyword>
<keyword id="KW-0406">Ion transport</keyword>
<keyword id="KW-0472">Membrane</keyword>
<keyword id="KW-0630">Potassium</keyword>
<keyword id="KW-0633">Potassium transport</keyword>
<keyword id="KW-0769">Symport</keyword>
<keyword id="KW-0812">Transmembrane</keyword>
<keyword id="KW-1133">Transmembrane helix</keyword>
<keyword id="KW-0813">Transport</keyword>
<reference key="1">
    <citation type="submission" date="2006-03" db="EMBL/GenBank/DDBJ databases">
        <title>Complete sequence of Rhodopseudomonas palustris BisB5.</title>
        <authorList>
            <consortium name="US DOE Joint Genome Institute"/>
            <person name="Copeland A."/>
            <person name="Lucas S."/>
            <person name="Lapidus A."/>
            <person name="Barry K."/>
            <person name="Detter J.C."/>
            <person name="Glavina del Rio T."/>
            <person name="Hammon N."/>
            <person name="Israni S."/>
            <person name="Dalin E."/>
            <person name="Tice H."/>
            <person name="Pitluck S."/>
            <person name="Chain P."/>
            <person name="Malfatti S."/>
            <person name="Shin M."/>
            <person name="Vergez L."/>
            <person name="Schmutz J."/>
            <person name="Larimer F."/>
            <person name="Land M."/>
            <person name="Hauser L."/>
            <person name="Pelletier D.A."/>
            <person name="Kyrpides N."/>
            <person name="Lykidis A."/>
            <person name="Oda Y."/>
            <person name="Harwood C.S."/>
            <person name="Richardson P."/>
        </authorList>
    </citation>
    <scope>NUCLEOTIDE SEQUENCE [LARGE SCALE GENOMIC DNA]</scope>
    <source>
        <strain>BisB5</strain>
    </source>
</reference>
<comment type="function">
    <text evidence="1">Transport of potassium into the cell. Likely operates as a K(+):H(+) symporter.</text>
</comment>
<comment type="catalytic activity">
    <reaction evidence="1">
        <text>K(+)(in) + H(+)(in) = K(+)(out) + H(+)(out)</text>
        <dbReference type="Rhea" id="RHEA:28490"/>
        <dbReference type="ChEBI" id="CHEBI:15378"/>
        <dbReference type="ChEBI" id="CHEBI:29103"/>
    </reaction>
    <physiologicalReaction direction="right-to-left" evidence="1">
        <dbReference type="Rhea" id="RHEA:28492"/>
    </physiologicalReaction>
</comment>
<comment type="subcellular location">
    <subcellularLocation>
        <location evidence="1">Cell inner membrane</location>
        <topology evidence="1">Multi-pass membrane protein</topology>
    </subcellularLocation>
</comment>
<comment type="similarity">
    <text evidence="1">Belongs to the HAK/KUP transporter (TC 2.A.72) family.</text>
</comment>
<organism>
    <name type="scientific">Rhodopseudomonas palustris (strain BisB5)</name>
    <dbReference type="NCBI Taxonomy" id="316057"/>
    <lineage>
        <taxon>Bacteria</taxon>
        <taxon>Pseudomonadati</taxon>
        <taxon>Pseudomonadota</taxon>
        <taxon>Alphaproteobacteria</taxon>
        <taxon>Hyphomicrobiales</taxon>
        <taxon>Nitrobacteraceae</taxon>
        <taxon>Rhodopseudomonas</taxon>
    </lineage>
</organism>
<feature type="chain" id="PRO_0000279827" description="Probable potassium transport system protein Kup 1">
    <location>
        <begin position="1"/>
        <end position="634"/>
    </location>
</feature>
<feature type="transmembrane region" description="Helical" evidence="1">
    <location>
        <begin position="20"/>
        <end position="40"/>
    </location>
</feature>
<feature type="transmembrane region" description="Helical" evidence="1">
    <location>
        <begin position="64"/>
        <end position="84"/>
    </location>
</feature>
<feature type="transmembrane region" description="Helical" evidence="1">
    <location>
        <begin position="110"/>
        <end position="130"/>
    </location>
</feature>
<feature type="transmembrane region" description="Helical" evidence="1">
    <location>
        <begin position="148"/>
        <end position="168"/>
    </location>
</feature>
<feature type="transmembrane region" description="Helical" evidence="1">
    <location>
        <begin position="176"/>
        <end position="196"/>
    </location>
</feature>
<feature type="transmembrane region" description="Helical" evidence="1">
    <location>
        <begin position="224"/>
        <end position="244"/>
    </location>
</feature>
<feature type="transmembrane region" description="Helical" evidence="1">
    <location>
        <begin position="256"/>
        <end position="276"/>
    </location>
</feature>
<feature type="transmembrane region" description="Helical" evidence="1">
    <location>
        <begin position="290"/>
        <end position="310"/>
    </location>
</feature>
<feature type="transmembrane region" description="Helical" evidence="1">
    <location>
        <begin position="348"/>
        <end position="368"/>
    </location>
</feature>
<feature type="transmembrane region" description="Helical" evidence="1">
    <location>
        <begin position="377"/>
        <end position="397"/>
    </location>
</feature>
<feature type="transmembrane region" description="Helical" evidence="1">
    <location>
        <begin position="405"/>
        <end position="425"/>
    </location>
</feature>
<feature type="transmembrane region" description="Helical" evidence="1">
    <location>
        <begin position="430"/>
        <end position="450"/>
    </location>
</feature>